<organism>
    <name type="scientific">Geobacillus kaustophilus (strain HTA426)</name>
    <dbReference type="NCBI Taxonomy" id="235909"/>
    <lineage>
        <taxon>Bacteria</taxon>
        <taxon>Bacillati</taxon>
        <taxon>Bacillota</taxon>
        <taxon>Bacilli</taxon>
        <taxon>Bacillales</taxon>
        <taxon>Anoxybacillaceae</taxon>
        <taxon>Geobacillus</taxon>
        <taxon>Geobacillus thermoleovorans group</taxon>
    </lineage>
</organism>
<reference key="1">
    <citation type="journal article" date="2004" name="Nucleic Acids Res.">
        <title>Thermoadaptation trait revealed by the genome sequence of thermophilic Geobacillus kaustophilus.</title>
        <authorList>
            <person name="Takami H."/>
            <person name="Takaki Y."/>
            <person name="Chee G.-J."/>
            <person name="Nishi S."/>
            <person name="Shimamura S."/>
            <person name="Suzuki H."/>
            <person name="Matsui S."/>
            <person name="Uchiyama I."/>
        </authorList>
    </citation>
    <scope>NUCLEOTIDE SEQUENCE [LARGE SCALE GENOMIC DNA]</scope>
    <source>
        <strain>HTA426</strain>
    </source>
</reference>
<comment type="function">
    <text evidence="1">Channel that opens in response to stretch forces in the membrane lipid bilayer. May participate in the regulation of osmotic pressure changes within the cell.</text>
</comment>
<comment type="subunit">
    <text evidence="1">Homopentamer.</text>
</comment>
<comment type="subcellular location">
    <subcellularLocation>
        <location evidence="1">Cell membrane</location>
        <topology evidence="1">Multi-pass membrane protein</topology>
    </subcellularLocation>
</comment>
<comment type="similarity">
    <text evidence="1">Belongs to the MscL family.</text>
</comment>
<sequence length="131" mass="14735">MWNEFKKFAIRGNVIDLAVGVIIGGAFGKIVSSLVNDIIMPLVGLILGGINFSDLSWKVGKAEVKYGAFIQTVVDFLIIAFSIFLFVKLINTLYERVKKQEEVKETAPTLTKEEELLTEIRDLLKQQRETT</sequence>
<protein>
    <recommendedName>
        <fullName evidence="1">Large-conductance mechanosensitive channel</fullName>
    </recommendedName>
</protein>
<dbReference type="EMBL" id="BA000043">
    <property type="protein sequence ID" value="BAD75655.1"/>
    <property type="molecule type" value="Genomic_DNA"/>
</dbReference>
<dbReference type="RefSeq" id="WP_011230867.1">
    <property type="nucleotide sequence ID" value="NC_006510.1"/>
</dbReference>
<dbReference type="SMR" id="Q5L081"/>
<dbReference type="STRING" id="235909.GK1370"/>
<dbReference type="GeneID" id="32063273"/>
<dbReference type="KEGG" id="gka:GK1370"/>
<dbReference type="eggNOG" id="COG1970">
    <property type="taxonomic scope" value="Bacteria"/>
</dbReference>
<dbReference type="HOGENOM" id="CLU_095787_0_0_9"/>
<dbReference type="Proteomes" id="UP000001172">
    <property type="component" value="Chromosome"/>
</dbReference>
<dbReference type="GO" id="GO:0005886">
    <property type="term" value="C:plasma membrane"/>
    <property type="evidence" value="ECO:0007669"/>
    <property type="project" value="UniProtKB-SubCell"/>
</dbReference>
<dbReference type="GO" id="GO:0008381">
    <property type="term" value="F:mechanosensitive monoatomic ion channel activity"/>
    <property type="evidence" value="ECO:0007669"/>
    <property type="project" value="UniProtKB-UniRule"/>
</dbReference>
<dbReference type="FunFam" id="1.10.1200.120:FF:000001">
    <property type="entry name" value="Large-conductance mechanosensitive channel"/>
    <property type="match status" value="1"/>
</dbReference>
<dbReference type="Gene3D" id="1.10.1200.120">
    <property type="entry name" value="Large-conductance mechanosensitive channel, MscL, domain 1"/>
    <property type="match status" value="1"/>
</dbReference>
<dbReference type="HAMAP" id="MF_00115">
    <property type="entry name" value="MscL"/>
    <property type="match status" value="1"/>
</dbReference>
<dbReference type="InterPro" id="IPR019823">
    <property type="entry name" value="Mechanosensitive_channel_CS"/>
</dbReference>
<dbReference type="InterPro" id="IPR001185">
    <property type="entry name" value="MS_channel"/>
</dbReference>
<dbReference type="InterPro" id="IPR037673">
    <property type="entry name" value="MSC/AndL"/>
</dbReference>
<dbReference type="InterPro" id="IPR036019">
    <property type="entry name" value="MscL_channel"/>
</dbReference>
<dbReference type="NCBIfam" id="TIGR00220">
    <property type="entry name" value="mscL"/>
    <property type="match status" value="1"/>
</dbReference>
<dbReference type="NCBIfam" id="NF001843">
    <property type="entry name" value="PRK00567.1-4"/>
    <property type="match status" value="1"/>
</dbReference>
<dbReference type="NCBIfam" id="NF010558">
    <property type="entry name" value="PRK13953.1"/>
    <property type="match status" value="1"/>
</dbReference>
<dbReference type="NCBIfam" id="NF010560">
    <property type="entry name" value="PRK13955.1"/>
    <property type="match status" value="1"/>
</dbReference>
<dbReference type="PANTHER" id="PTHR30266:SF2">
    <property type="entry name" value="LARGE-CONDUCTANCE MECHANOSENSITIVE CHANNEL"/>
    <property type="match status" value="1"/>
</dbReference>
<dbReference type="PANTHER" id="PTHR30266">
    <property type="entry name" value="MECHANOSENSITIVE CHANNEL MSCL"/>
    <property type="match status" value="1"/>
</dbReference>
<dbReference type="Pfam" id="PF01741">
    <property type="entry name" value="MscL"/>
    <property type="match status" value="1"/>
</dbReference>
<dbReference type="PRINTS" id="PR01264">
    <property type="entry name" value="MECHCHANNEL"/>
</dbReference>
<dbReference type="SUPFAM" id="SSF81330">
    <property type="entry name" value="Gated mechanosensitive channel"/>
    <property type="match status" value="1"/>
</dbReference>
<dbReference type="PROSITE" id="PS01327">
    <property type="entry name" value="MSCL"/>
    <property type="match status" value="1"/>
</dbReference>
<evidence type="ECO:0000255" key="1">
    <source>
        <dbReference type="HAMAP-Rule" id="MF_00115"/>
    </source>
</evidence>
<keyword id="KW-1003">Cell membrane</keyword>
<keyword id="KW-0407">Ion channel</keyword>
<keyword id="KW-0406">Ion transport</keyword>
<keyword id="KW-0472">Membrane</keyword>
<keyword id="KW-1185">Reference proteome</keyword>
<keyword id="KW-0812">Transmembrane</keyword>
<keyword id="KW-1133">Transmembrane helix</keyword>
<keyword id="KW-0813">Transport</keyword>
<name>MSCL_GEOKA</name>
<proteinExistence type="inferred from homology"/>
<feature type="chain" id="PRO_0000238001" description="Large-conductance mechanosensitive channel">
    <location>
        <begin position="1"/>
        <end position="131"/>
    </location>
</feature>
<feature type="transmembrane region" description="Helical" evidence="1">
    <location>
        <begin position="8"/>
        <end position="28"/>
    </location>
</feature>
<feature type="transmembrane region" description="Helical" evidence="1">
    <location>
        <begin position="30"/>
        <end position="50"/>
    </location>
</feature>
<feature type="transmembrane region" description="Helical" evidence="1">
    <location>
        <begin position="67"/>
        <end position="87"/>
    </location>
</feature>
<gene>
    <name evidence="1" type="primary">mscL</name>
    <name type="ordered locus">GK1370</name>
</gene>
<accession>Q5L081</accession>